<protein>
    <recommendedName>
        <fullName evidence="1">Probable lipid kinase YegS-like</fullName>
        <ecNumber evidence="1">2.7.1.-</ecNumber>
    </recommendedName>
</protein>
<evidence type="ECO:0000255" key="1">
    <source>
        <dbReference type="HAMAP-Rule" id="MF_01377"/>
    </source>
</evidence>
<feature type="chain" id="PRO_1000068254" description="Probable lipid kinase YegS-like">
    <location>
        <begin position="1"/>
        <end position="299"/>
    </location>
</feature>
<feature type="domain" description="DAGKc" evidence="1">
    <location>
        <begin position="2"/>
        <end position="133"/>
    </location>
</feature>
<feature type="active site" description="Proton acceptor" evidence="1">
    <location>
        <position position="271"/>
    </location>
</feature>
<feature type="binding site" evidence="1">
    <location>
        <position position="40"/>
    </location>
    <ligand>
        <name>ATP</name>
        <dbReference type="ChEBI" id="CHEBI:30616"/>
    </ligand>
</feature>
<feature type="binding site" evidence="1">
    <location>
        <begin position="66"/>
        <end position="72"/>
    </location>
    <ligand>
        <name>ATP</name>
        <dbReference type="ChEBI" id="CHEBI:30616"/>
    </ligand>
</feature>
<feature type="binding site" evidence="1">
    <location>
        <position position="95"/>
    </location>
    <ligand>
        <name>ATP</name>
        <dbReference type="ChEBI" id="CHEBI:30616"/>
    </ligand>
</feature>
<feature type="binding site" evidence="1">
    <location>
        <position position="215"/>
    </location>
    <ligand>
        <name>Mg(2+)</name>
        <dbReference type="ChEBI" id="CHEBI:18420"/>
    </ligand>
</feature>
<feature type="binding site" evidence="1">
    <location>
        <position position="218"/>
    </location>
    <ligand>
        <name>Mg(2+)</name>
        <dbReference type="ChEBI" id="CHEBI:18420"/>
    </ligand>
</feature>
<feature type="binding site" evidence="1">
    <location>
        <position position="220"/>
    </location>
    <ligand>
        <name>Mg(2+)</name>
        <dbReference type="ChEBI" id="CHEBI:18420"/>
    </ligand>
</feature>
<sequence length="299" mass="31897">MSRSAGSFLILNGKSADNEILRGSVKLLRDQGHPIEVRVTWEKGDAARYVSEAADQGAQTVIAAGGDGTINEVAAALAGVTQEKRPALGLLPLGTANDFATSAAVPDDIELALKLAIEGRAVPIDIAHVNDKTWFINMATGGFGTRITTETPERLKAALGGVSYLIHGLMRMDALKADRCEIRGENFHWQGDALVIGIGNGRQAGGGQELCPEALINDGLLHLRIFTGEELLPALFTTLTQPEESPNIIDGASPWFEITAPHEITFNLDGEPLSGQHFRIVVEPGALQCRLPPDCPLLK</sequence>
<organism>
    <name type="scientific">Cronobacter sakazakii (strain ATCC BAA-894)</name>
    <name type="common">Enterobacter sakazakii</name>
    <dbReference type="NCBI Taxonomy" id="290339"/>
    <lineage>
        <taxon>Bacteria</taxon>
        <taxon>Pseudomonadati</taxon>
        <taxon>Pseudomonadota</taxon>
        <taxon>Gammaproteobacteria</taxon>
        <taxon>Enterobacterales</taxon>
        <taxon>Enterobacteriaceae</taxon>
        <taxon>Cronobacter</taxon>
    </lineage>
</organism>
<name>YEGS_CROS8</name>
<dbReference type="EC" id="2.7.1.-" evidence="1"/>
<dbReference type="EMBL" id="CP000783">
    <property type="protein sequence ID" value="ABU76404.1"/>
    <property type="molecule type" value="Genomic_DNA"/>
</dbReference>
<dbReference type="SMR" id="A7MHI5"/>
<dbReference type="KEGG" id="esa:ESA_01136"/>
<dbReference type="PATRIC" id="fig|290339.8.peg.1007"/>
<dbReference type="HOGENOM" id="CLU_045532_1_1_6"/>
<dbReference type="Proteomes" id="UP000000260">
    <property type="component" value="Chromosome"/>
</dbReference>
<dbReference type="GO" id="GO:0005737">
    <property type="term" value="C:cytoplasm"/>
    <property type="evidence" value="ECO:0007669"/>
    <property type="project" value="UniProtKB-SubCell"/>
</dbReference>
<dbReference type="GO" id="GO:0005886">
    <property type="term" value="C:plasma membrane"/>
    <property type="evidence" value="ECO:0007669"/>
    <property type="project" value="TreeGrafter"/>
</dbReference>
<dbReference type="GO" id="GO:0005524">
    <property type="term" value="F:ATP binding"/>
    <property type="evidence" value="ECO:0007669"/>
    <property type="project" value="UniProtKB-UniRule"/>
</dbReference>
<dbReference type="GO" id="GO:0001727">
    <property type="term" value="F:lipid kinase activity"/>
    <property type="evidence" value="ECO:0007669"/>
    <property type="project" value="UniProtKB-UniRule"/>
</dbReference>
<dbReference type="GO" id="GO:0000287">
    <property type="term" value="F:magnesium ion binding"/>
    <property type="evidence" value="ECO:0007669"/>
    <property type="project" value="UniProtKB-UniRule"/>
</dbReference>
<dbReference type="GO" id="GO:0008654">
    <property type="term" value="P:phospholipid biosynthetic process"/>
    <property type="evidence" value="ECO:0007669"/>
    <property type="project" value="UniProtKB-UniRule"/>
</dbReference>
<dbReference type="Gene3D" id="2.60.200.40">
    <property type="match status" value="1"/>
</dbReference>
<dbReference type="Gene3D" id="3.40.50.10330">
    <property type="entry name" value="Probable inorganic polyphosphate/atp-NAD kinase, domain 1"/>
    <property type="match status" value="1"/>
</dbReference>
<dbReference type="HAMAP" id="MF_01377">
    <property type="entry name" value="YegS"/>
    <property type="match status" value="1"/>
</dbReference>
<dbReference type="InterPro" id="IPR017438">
    <property type="entry name" value="ATP-NAD_kinase_N"/>
</dbReference>
<dbReference type="InterPro" id="IPR005218">
    <property type="entry name" value="Diacylglycerol/lipid_kinase"/>
</dbReference>
<dbReference type="InterPro" id="IPR001206">
    <property type="entry name" value="Diacylglycerol_kinase_cat_dom"/>
</dbReference>
<dbReference type="InterPro" id="IPR022433">
    <property type="entry name" value="Lip_kinase_YegS"/>
</dbReference>
<dbReference type="InterPro" id="IPR050187">
    <property type="entry name" value="Lipid_Phosphate_FormReg"/>
</dbReference>
<dbReference type="InterPro" id="IPR016064">
    <property type="entry name" value="NAD/diacylglycerol_kinase_sf"/>
</dbReference>
<dbReference type="InterPro" id="IPR045540">
    <property type="entry name" value="YegS/DAGK_C"/>
</dbReference>
<dbReference type="NCBIfam" id="TIGR03702">
    <property type="entry name" value="lip_kinase_YegS"/>
    <property type="match status" value="1"/>
</dbReference>
<dbReference type="NCBIfam" id="NF009602">
    <property type="entry name" value="PRK13054.1"/>
    <property type="match status" value="1"/>
</dbReference>
<dbReference type="NCBIfam" id="TIGR00147">
    <property type="entry name" value="YegS/Rv2252/BmrU family lipid kinase"/>
    <property type="match status" value="1"/>
</dbReference>
<dbReference type="PANTHER" id="PTHR12358:SF106">
    <property type="entry name" value="LIPID KINASE YEGS"/>
    <property type="match status" value="1"/>
</dbReference>
<dbReference type="PANTHER" id="PTHR12358">
    <property type="entry name" value="SPHINGOSINE KINASE"/>
    <property type="match status" value="1"/>
</dbReference>
<dbReference type="Pfam" id="PF00781">
    <property type="entry name" value="DAGK_cat"/>
    <property type="match status" value="1"/>
</dbReference>
<dbReference type="Pfam" id="PF19279">
    <property type="entry name" value="YegS_C"/>
    <property type="match status" value="1"/>
</dbReference>
<dbReference type="SMART" id="SM00046">
    <property type="entry name" value="DAGKc"/>
    <property type="match status" value="1"/>
</dbReference>
<dbReference type="SUPFAM" id="SSF111331">
    <property type="entry name" value="NAD kinase/diacylglycerol kinase-like"/>
    <property type="match status" value="1"/>
</dbReference>
<dbReference type="PROSITE" id="PS50146">
    <property type="entry name" value="DAGK"/>
    <property type="match status" value="1"/>
</dbReference>
<keyword id="KW-0067">ATP-binding</keyword>
<keyword id="KW-0963">Cytoplasm</keyword>
<keyword id="KW-0418">Kinase</keyword>
<keyword id="KW-0444">Lipid biosynthesis</keyword>
<keyword id="KW-0443">Lipid metabolism</keyword>
<keyword id="KW-0460">Magnesium</keyword>
<keyword id="KW-0479">Metal-binding</keyword>
<keyword id="KW-0547">Nucleotide-binding</keyword>
<keyword id="KW-0594">Phospholipid biosynthesis</keyword>
<keyword id="KW-1208">Phospholipid metabolism</keyword>
<keyword id="KW-1185">Reference proteome</keyword>
<keyword id="KW-0808">Transferase</keyword>
<reference key="1">
    <citation type="journal article" date="2010" name="PLoS ONE">
        <title>Genome sequence of Cronobacter sakazakii BAA-894 and comparative genomic hybridization analysis with other Cronobacter species.</title>
        <authorList>
            <person name="Kucerova E."/>
            <person name="Clifton S.W."/>
            <person name="Xia X.Q."/>
            <person name="Long F."/>
            <person name="Porwollik S."/>
            <person name="Fulton L."/>
            <person name="Fronick C."/>
            <person name="Minx P."/>
            <person name="Kyung K."/>
            <person name="Warren W."/>
            <person name="Fulton R."/>
            <person name="Feng D."/>
            <person name="Wollam A."/>
            <person name="Shah N."/>
            <person name="Bhonagiri V."/>
            <person name="Nash W.E."/>
            <person name="Hallsworth-Pepin K."/>
            <person name="Wilson R.K."/>
            <person name="McClelland M."/>
            <person name="Forsythe S.J."/>
        </authorList>
    </citation>
    <scope>NUCLEOTIDE SEQUENCE [LARGE SCALE GENOMIC DNA]</scope>
    <source>
        <strain>ATCC BAA-894</strain>
    </source>
</reference>
<comment type="function">
    <text evidence="1">Probably phosphorylates lipids; the in vivo substrate is unknown.</text>
</comment>
<comment type="cofactor">
    <cofactor evidence="1">
        <name>Mg(2+)</name>
        <dbReference type="ChEBI" id="CHEBI:18420"/>
    </cofactor>
    <cofactor evidence="1">
        <name>Ca(2+)</name>
        <dbReference type="ChEBI" id="CHEBI:29108"/>
    </cofactor>
    <text evidence="1">Binds 1 Mg(2+) ion per subunit. Ca(2+) may be able to substitute.</text>
</comment>
<comment type="subcellular location">
    <subcellularLocation>
        <location evidence="1">Cytoplasm</location>
    </subcellularLocation>
</comment>
<comment type="similarity">
    <text evidence="1">Belongs to the diacylglycerol/lipid kinase family. YegS lipid kinase subfamily.</text>
</comment>
<proteinExistence type="inferred from homology"/>
<gene>
    <name type="ordered locus">ESA_01136</name>
</gene>
<accession>A7MHI5</accession>